<name>DXS_BLOPB</name>
<gene>
    <name evidence="1" type="primary">dxs</name>
    <name type="ordered locus">BPEN_244</name>
</gene>
<keyword id="KW-0414">Isoprene biosynthesis</keyword>
<keyword id="KW-0460">Magnesium</keyword>
<keyword id="KW-0479">Metal-binding</keyword>
<keyword id="KW-1185">Reference proteome</keyword>
<keyword id="KW-0784">Thiamine biosynthesis</keyword>
<keyword id="KW-0786">Thiamine pyrophosphate</keyword>
<keyword id="KW-0808">Transferase</keyword>
<protein>
    <recommendedName>
        <fullName evidence="1">1-deoxy-D-xylulose-5-phosphate synthase</fullName>
        <ecNumber evidence="1">2.2.1.7</ecNumber>
    </recommendedName>
    <alternativeName>
        <fullName evidence="1">1-deoxyxylulose-5-phosphate synthase</fullName>
        <shortName evidence="1">DXP synthase</shortName>
        <shortName evidence="1">DXPS</shortName>
    </alternativeName>
</protein>
<organism>
    <name type="scientific">Blochmanniella pennsylvanica (strain BPEN)</name>
    <dbReference type="NCBI Taxonomy" id="291272"/>
    <lineage>
        <taxon>Bacteria</taxon>
        <taxon>Pseudomonadati</taxon>
        <taxon>Pseudomonadota</taxon>
        <taxon>Gammaproteobacteria</taxon>
        <taxon>Enterobacterales</taxon>
        <taxon>Enterobacteriaceae</taxon>
        <taxon>ant endosymbionts</taxon>
        <taxon>Candidatus Blochmanniella</taxon>
    </lineage>
</organism>
<comment type="function">
    <text evidence="1">Catalyzes the acyloin condensation reaction between C atoms 2 and 3 of pyruvate and glyceraldehyde 3-phosphate to yield 1-deoxy-D-xylulose-5-phosphate (DXP).</text>
</comment>
<comment type="catalytic activity">
    <reaction evidence="1">
        <text>D-glyceraldehyde 3-phosphate + pyruvate + H(+) = 1-deoxy-D-xylulose 5-phosphate + CO2</text>
        <dbReference type="Rhea" id="RHEA:12605"/>
        <dbReference type="ChEBI" id="CHEBI:15361"/>
        <dbReference type="ChEBI" id="CHEBI:15378"/>
        <dbReference type="ChEBI" id="CHEBI:16526"/>
        <dbReference type="ChEBI" id="CHEBI:57792"/>
        <dbReference type="ChEBI" id="CHEBI:59776"/>
        <dbReference type="EC" id="2.2.1.7"/>
    </reaction>
</comment>
<comment type="cofactor">
    <cofactor evidence="1">
        <name>Mg(2+)</name>
        <dbReference type="ChEBI" id="CHEBI:18420"/>
    </cofactor>
    <text evidence="1">Binds 1 Mg(2+) ion per subunit.</text>
</comment>
<comment type="cofactor">
    <cofactor evidence="1">
        <name>thiamine diphosphate</name>
        <dbReference type="ChEBI" id="CHEBI:58937"/>
    </cofactor>
    <text evidence="1">Binds 1 thiamine pyrophosphate per subunit.</text>
</comment>
<comment type="pathway">
    <text evidence="1">Metabolic intermediate biosynthesis; 1-deoxy-D-xylulose 5-phosphate biosynthesis; 1-deoxy-D-xylulose 5-phosphate from D-glyceraldehyde 3-phosphate and pyruvate: step 1/1.</text>
</comment>
<comment type="subunit">
    <text evidence="1">Homodimer.</text>
</comment>
<comment type="similarity">
    <text evidence="1">Belongs to the transketolase family. DXPS subfamily.</text>
</comment>
<dbReference type="EC" id="2.2.1.7" evidence="1"/>
<dbReference type="EMBL" id="CP000016">
    <property type="protein sequence ID" value="AAZ40875.1"/>
    <property type="molecule type" value="Genomic_DNA"/>
</dbReference>
<dbReference type="RefSeq" id="WP_011282782.1">
    <property type="nucleotide sequence ID" value="NC_007292.1"/>
</dbReference>
<dbReference type="SMR" id="Q493G7"/>
<dbReference type="STRING" id="291272.BPEN_244"/>
<dbReference type="KEGG" id="bpn:BPEN_244"/>
<dbReference type="eggNOG" id="COG1154">
    <property type="taxonomic scope" value="Bacteria"/>
</dbReference>
<dbReference type="HOGENOM" id="CLU_009227_1_4_6"/>
<dbReference type="OrthoDB" id="9803371at2"/>
<dbReference type="UniPathway" id="UPA00064">
    <property type="reaction ID" value="UER00091"/>
</dbReference>
<dbReference type="Proteomes" id="UP000007794">
    <property type="component" value="Chromosome"/>
</dbReference>
<dbReference type="GO" id="GO:0005829">
    <property type="term" value="C:cytosol"/>
    <property type="evidence" value="ECO:0007669"/>
    <property type="project" value="TreeGrafter"/>
</dbReference>
<dbReference type="GO" id="GO:0008661">
    <property type="term" value="F:1-deoxy-D-xylulose-5-phosphate synthase activity"/>
    <property type="evidence" value="ECO:0007669"/>
    <property type="project" value="UniProtKB-UniRule"/>
</dbReference>
<dbReference type="GO" id="GO:0000287">
    <property type="term" value="F:magnesium ion binding"/>
    <property type="evidence" value="ECO:0007669"/>
    <property type="project" value="UniProtKB-UniRule"/>
</dbReference>
<dbReference type="GO" id="GO:0030976">
    <property type="term" value="F:thiamine pyrophosphate binding"/>
    <property type="evidence" value="ECO:0007669"/>
    <property type="project" value="UniProtKB-UniRule"/>
</dbReference>
<dbReference type="GO" id="GO:0052865">
    <property type="term" value="P:1-deoxy-D-xylulose 5-phosphate biosynthetic process"/>
    <property type="evidence" value="ECO:0007669"/>
    <property type="project" value="UniProtKB-UniPathway"/>
</dbReference>
<dbReference type="GO" id="GO:0019288">
    <property type="term" value="P:isopentenyl diphosphate biosynthetic process, methylerythritol 4-phosphate pathway"/>
    <property type="evidence" value="ECO:0007669"/>
    <property type="project" value="TreeGrafter"/>
</dbReference>
<dbReference type="GO" id="GO:0016114">
    <property type="term" value="P:terpenoid biosynthetic process"/>
    <property type="evidence" value="ECO:0007669"/>
    <property type="project" value="UniProtKB-UniRule"/>
</dbReference>
<dbReference type="GO" id="GO:0009228">
    <property type="term" value="P:thiamine biosynthetic process"/>
    <property type="evidence" value="ECO:0007669"/>
    <property type="project" value="UniProtKB-UniRule"/>
</dbReference>
<dbReference type="CDD" id="cd02007">
    <property type="entry name" value="TPP_DXS"/>
    <property type="match status" value="1"/>
</dbReference>
<dbReference type="CDD" id="cd07033">
    <property type="entry name" value="TPP_PYR_DXS_TK_like"/>
    <property type="match status" value="1"/>
</dbReference>
<dbReference type="FunFam" id="3.40.50.920:FF:000002">
    <property type="entry name" value="1-deoxy-D-xylulose-5-phosphate synthase"/>
    <property type="match status" value="1"/>
</dbReference>
<dbReference type="FunFam" id="3.40.50.970:FF:000005">
    <property type="entry name" value="1-deoxy-D-xylulose-5-phosphate synthase"/>
    <property type="match status" value="1"/>
</dbReference>
<dbReference type="Gene3D" id="3.40.50.920">
    <property type="match status" value="1"/>
</dbReference>
<dbReference type="Gene3D" id="3.40.50.970">
    <property type="match status" value="2"/>
</dbReference>
<dbReference type="HAMAP" id="MF_00315">
    <property type="entry name" value="DXP_synth"/>
    <property type="match status" value="1"/>
</dbReference>
<dbReference type="InterPro" id="IPR005477">
    <property type="entry name" value="Dxylulose-5-P_synthase"/>
</dbReference>
<dbReference type="InterPro" id="IPR029061">
    <property type="entry name" value="THDP-binding"/>
</dbReference>
<dbReference type="InterPro" id="IPR009014">
    <property type="entry name" value="Transketo_C/PFOR_II"/>
</dbReference>
<dbReference type="InterPro" id="IPR005475">
    <property type="entry name" value="Transketolase-like_Pyr-bd"/>
</dbReference>
<dbReference type="InterPro" id="IPR020826">
    <property type="entry name" value="Transketolase_BS"/>
</dbReference>
<dbReference type="InterPro" id="IPR033248">
    <property type="entry name" value="Transketolase_C"/>
</dbReference>
<dbReference type="InterPro" id="IPR049557">
    <property type="entry name" value="Transketolase_CS"/>
</dbReference>
<dbReference type="NCBIfam" id="TIGR00204">
    <property type="entry name" value="dxs"/>
    <property type="match status" value="1"/>
</dbReference>
<dbReference type="NCBIfam" id="NF003933">
    <property type="entry name" value="PRK05444.2-2"/>
    <property type="match status" value="1"/>
</dbReference>
<dbReference type="PANTHER" id="PTHR43322">
    <property type="entry name" value="1-D-DEOXYXYLULOSE 5-PHOSPHATE SYNTHASE-RELATED"/>
    <property type="match status" value="1"/>
</dbReference>
<dbReference type="PANTHER" id="PTHR43322:SF5">
    <property type="entry name" value="1-DEOXY-D-XYLULOSE-5-PHOSPHATE SYNTHASE, CHLOROPLASTIC"/>
    <property type="match status" value="1"/>
</dbReference>
<dbReference type="Pfam" id="PF13292">
    <property type="entry name" value="DXP_synthase_N"/>
    <property type="match status" value="1"/>
</dbReference>
<dbReference type="Pfam" id="PF02779">
    <property type="entry name" value="Transket_pyr"/>
    <property type="match status" value="1"/>
</dbReference>
<dbReference type="Pfam" id="PF02780">
    <property type="entry name" value="Transketolase_C"/>
    <property type="match status" value="1"/>
</dbReference>
<dbReference type="SMART" id="SM00861">
    <property type="entry name" value="Transket_pyr"/>
    <property type="match status" value="1"/>
</dbReference>
<dbReference type="SUPFAM" id="SSF52518">
    <property type="entry name" value="Thiamin diphosphate-binding fold (THDP-binding)"/>
    <property type="match status" value="2"/>
</dbReference>
<dbReference type="SUPFAM" id="SSF52922">
    <property type="entry name" value="TK C-terminal domain-like"/>
    <property type="match status" value="1"/>
</dbReference>
<dbReference type="PROSITE" id="PS00801">
    <property type="entry name" value="TRANSKETOLASE_1"/>
    <property type="match status" value="1"/>
</dbReference>
<dbReference type="PROSITE" id="PS00802">
    <property type="entry name" value="TRANSKETOLASE_2"/>
    <property type="match status" value="1"/>
</dbReference>
<feature type="chain" id="PRO_0000256383" description="1-deoxy-D-xylulose-5-phosphate synthase">
    <location>
        <begin position="1"/>
        <end position="624"/>
    </location>
</feature>
<feature type="binding site" evidence="1">
    <location>
        <position position="80"/>
    </location>
    <ligand>
        <name>thiamine diphosphate</name>
        <dbReference type="ChEBI" id="CHEBI:58937"/>
    </ligand>
</feature>
<feature type="binding site" evidence="1">
    <location>
        <begin position="121"/>
        <end position="123"/>
    </location>
    <ligand>
        <name>thiamine diphosphate</name>
        <dbReference type="ChEBI" id="CHEBI:58937"/>
    </ligand>
</feature>
<feature type="binding site" evidence="1">
    <location>
        <position position="152"/>
    </location>
    <ligand>
        <name>Mg(2+)</name>
        <dbReference type="ChEBI" id="CHEBI:18420"/>
    </ligand>
</feature>
<feature type="binding site" evidence="1">
    <location>
        <begin position="153"/>
        <end position="154"/>
    </location>
    <ligand>
        <name>thiamine diphosphate</name>
        <dbReference type="ChEBI" id="CHEBI:58937"/>
    </ligand>
</feature>
<feature type="binding site" evidence="1">
    <location>
        <position position="181"/>
    </location>
    <ligand>
        <name>Mg(2+)</name>
        <dbReference type="ChEBI" id="CHEBI:18420"/>
    </ligand>
</feature>
<feature type="binding site" evidence="1">
    <location>
        <position position="181"/>
    </location>
    <ligand>
        <name>thiamine diphosphate</name>
        <dbReference type="ChEBI" id="CHEBI:58937"/>
    </ligand>
</feature>
<feature type="binding site" evidence="1">
    <location>
        <position position="289"/>
    </location>
    <ligand>
        <name>thiamine diphosphate</name>
        <dbReference type="ChEBI" id="CHEBI:58937"/>
    </ligand>
</feature>
<feature type="binding site" evidence="1">
    <location>
        <position position="371"/>
    </location>
    <ligand>
        <name>thiamine diphosphate</name>
        <dbReference type="ChEBI" id="CHEBI:58937"/>
    </ligand>
</feature>
<accession>Q493G7</accession>
<evidence type="ECO:0000255" key="1">
    <source>
        <dbReference type="HAMAP-Rule" id="MF_00315"/>
    </source>
</evidence>
<reference key="1">
    <citation type="journal article" date="2005" name="Genome Res.">
        <title>Genome sequence of Blochmannia pennsylvanicus indicates parallel evolutionary trends among bacterial mutualists of insects.</title>
        <authorList>
            <person name="Degnan P.H."/>
            <person name="Lazarus A.B."/>
            <person name="Wernegreen J.J."/>
        </authorList>
    </citation>
    <scope>NUCLEOTIDE SEQUENCE [LARGE SCALE GENOMIC DNA]</scope>
    <source>
        <strain>BPEN</strain>
    </source>
</reference>
<sequence>MNCNSNKYPILGLINTPKELRQLSEDHLAKLCNELRQFLLTSVSKSSGHFASGLGTIELTVALHYVYNTPFDYLIWDVGHQAYPHKILTGRRERIFSIRRKNGLHPFPCRDESEYDVLSVGHSSTSISAGLGLAIAAEREMLGRRTVCVIGDGAITAGMAFEAMNHAGFTKSDLLIILNDNEMSISENVGALNNHHTHILSKKVYSNLKVDNNKILSDVLSTNTLIKHIGNQIKNFNGTSSSLFSQLGFNYIGPVNGHDVLELVYILRNIRDMKGPQFLHIITKKGCGYEPAEKDPIKWHAVPKFNPESGSLPVEHSKNITYSAIFGDWLCQVAARDNKIIGITPAMREGSGMSIFSQKYPKQYFDVAIAEQHAVTFAAGLAIAGYKPIVAIYSTFLQRAYDQVIHDVAIQNLPVLFAVDRGGIVGADGQTHQGAFDLSYLRCIPNMIIMTPSDACECKLMLYTGYRYRYGPSVVRYPKGYAVPGNLADTTKLYTLPLSKGVIRRQGNCIAILNFGTLLQSAYNVASKLNATLVDMRFVKPLDENLIKTLAKNHQVLITLEENTVMGGAGSGVNEFIMQNKLSIPVLNIGLPDFFISQGSQSEILSELGLDSIGIYKKIIKWIH</sequence>
<proteinExistence type="inferred from homology"/>